<comment type="function">
    <text evidence="1">Endonuclease IV plays a role in DNA repair. It cleaves phosphodiester bonds at apurinic or apyrimidinic (AP) sites, generating a 3'-hydroxyl group and a 5'-terminal sugar phosphate.</text>
</comment>
<comment type="catalytic activity">
    <reaction evidence="1">
        <text>Endonucleolytic cleavage to 5'-phosphooligonucleotide end-products.</text>
        <dbReference type="EC" id="3.1.21.2"/>
    </reaction>
</comment>
<comment type="cofactor">
    <cofactor evidence="1">
        <name>Zn(2+)</name>
        <dbReference type="ChEBI" id="CHEBI:29105"/>
    </cofactor>
    <text evidence="1">Binds 3 Zn(2+) ions.</text>
</comment>
<comment type="similarity">
    <text evidence="1">Belongs to the AP endonuclease 2 family.</text>
</comment>
<reference key="1">
    <citation type="journal article" date="2005" name="Nucleic Acids Res.">
        <title>Genome dynamics and diversity of Shigella species, the etiologic agents of bacillary dysentery.</title>
        <authorList>
            <person name="Yang F."/>
            <person name="Yang J."/>
            <person name="Zhang X."/>
            <person name="Chen L."/>
            <person name="Jiang Y."/>
            <person name="Yan Y."/>
            <person name="Tang X."/>
            <person name="Wang J."/>
            <person name="Xiong Z."/>
            <person name="Dong J."/>
            <person name="Xue Y."/>
            <person name="Zhu Y."/>
            <person name="Xu X."/>
            <person name="Sun L."/>
            <person name="Chen S."/>
            <person name="Nie H."/>
            <person name="Peng J."/>
            <person name="Xu J."/>
            <person name="Wang Y."/>
            <person name="Yuan Z."/>
            <person name="Wen Y."/>
            <person name="Yao Z."/>
            <person name="Shen Y."/>
            <person name="Qiang B."/>
            <person name="Hou Y."/>
            <person name="Yu J."/>
            <person name="Jin Q."/>
        </authorList>
    </citation>
    <scope>NUCLEOTIDE SEQUENCE [LARGE SCALE GENOMIC DNA]</scope>
    <source>
        <strain>Sb227</strain>
    </source>
</reference>
<sequence length="285" mass="31492">MKYIGAHVSAAGGLANAAIRAAEIDATAFALFTKNQRQWRAAPLTTQTIDEFKAACEKYHYTSAQILPHDSYLINLGHPVTEALEKSRDAFIDEMQRCEQLGLSLLNFHPGSHLMQISEEDCLARIAESINIALDKTQGVTAVIENTAGQGSNLGFKFEHLAAIIDGVEDKSRVGVCIDTCHAFAAGYDLRTPAECEKTFADFARIVGFKYLRGMHLNDAKSTFGSRVDRHHSLGEGNIGHDAFRWIMQDDRFDGIPLILETINPDIWAEEIAWLKAQQTEKAVA</sequence>
<organism>
    <name type="scientific">Shigella boydii serotype 4 (strain Sb227)</name>
    <dbReference type="NCBI Taxonomy" id="300268"/>
    <lineage>
        <taxon>Bacteria</taxon>
        <taxon>Pseudomonadati</taxon>
        <taxon>Pseudomonadota</taxon>
        <taxon>Gammaproteobacteria</taxon>
        <taxon>Enterobacterales</taxon>
        <taxon>Enterobacteriaceae</taxon>
        <taxon>Shigella</taxon>
    </lineage>
</organism>
<protein>
    <recommendedName>
        <fullName evidence="1">Probable endonuclease 4</fullName>
        <ecNumber evidence="1">3.1.21.2</ecNumber>
    </recommendedName>
    <alternativeName>
        <fullName evidence="1">Endodeoxyribonuclease IV</fullName>
    </alternativeName>
    <alternativeName>
        <fullName evidence="1">Endonuclease IV</fullName>
    </alternativeName>
</protein>
<feature type="chain" id="PRO_1000011332" description="Probable endonuclease 4">
    <location>
        <begin position="1"/>
        <end position="285"/>
    </location>
</feature>
<feature type="binding site" evidence="1">
    <location>
        <position position="69"/>
    </location>
    <ligand>
        <name>Zn(2+)</name>
        <dbReference type="ChEBI" id="CHEBI:29105"/>
        <label>1</label>
    </ligand>
</feature>
<feature type="binding site" evidence="1">
    <location>
        <position position="109"/>
    </location>
    <ligand>
        <name>Zn(2+)</name>
        <dbReference type="ChEBI" id="CHEBI:29105"/>
        <label>1</label>
    </ligand>
</feature>
<feature type="binding site" evidence="1">
    <location>
        <position position="145"/>
    </location>
    <ligand>
        <name>Zn(2+)</name>
        <dbReference type="ChEBI" id="CHEBI:29105"/>
        <label>1</label>
    </ligand>
</feature>
<feature type="binding site" evidence="1">
    <location>
        <position position="145"/>
    </location>
    <ligand>
        <name>Zn(2+)</name>
        <dbReference type="ChEBI" id="CHEBI:29105"/>
        <label>2</label>
    </ligand>
</feature>
<feature type="binding site" evidence="1">
    <location>
        <position position="179"/>
    </location>
    <ligand>
        <name>Zn(2+)</name>
        <dbReference type="ChEBI" id="CHEBI:29105"/>
        <label>2</label>
    </ligand>
</feature>
<feature type="binding site" evidence="1">
    <location>
        <position position="182"/>
    </location>
    <ligand>
        <name>Zn(2+)</name>
        <dbReference type="ChEBI" id="CHEBI:29105"/>
        <label>3</label>
    </ligand>
</feature>
<feature type="binding site" evidence="1">
    <location>
        <position position="216"/>
    </location>
    <ligand>
        <name>Zn(2+)</name>
        <dbReference type="ChEBI" id="CHEBI:29105"/>
        <label>2</label>
    </ligand>
</feature>
<feature type="binding site" evidence="1">
    <location>
        <position position="229"/>
    </location>
    <ligand>
        <name>Zn(2+)</name>
        <dbReference type="ChEBI" id="CHEBI:29105"/>
        <label>3</label>
    </ligand>
</feature>
<feature type="binding site" evidence="1">
    <location>
        <position position="231"/>
    </location>
    <ligand>
        <name>Zn(2+)</name>
        <dbReference type="ChEBI" id="CHEBI:29105"/>
        <label>3</label>
    </ligand>
</feature>
<feature type="binding site" evidence="1">
    <location>
        <position position="261"/>
    </location>
    <ligand>
        <name>Zn(2+)</name>
        <dbReference type="ChEBI" id="CHEBI:29105"/>
        <label>2</label>
    </ligand>
</feature>
<keyword id="KW-0227">DNA damage</keyword>
<keyword id="KW-0234">DNA repair</keyword>
<keyword id="KW-0255">Endonuclease</keyword>
<keyword id="KW-0378">Hydrolase</keyword>
<keyword id="KW-0479">Metal-binding</keyword>
<keyword id="KW-0540">Nuclease</keyword>
<keyword id="KW-0862">Zinc</keyword>
<proteinExistence type="inferred from homology"/>
<evidence type="ECO:0000255" key="1">
    <source>
        <dbReference type="HAMAP-Rule" id="MF_00152"/>
    </source>
</evidence>
<name>END4_SHIBS</name>
<dbReference type="EC" id="3.1.21.2" evidence="1"/>
<dbReference type="EMBL" id="CP000036">
    <property type="protein sequence ID" value="ABB66742.1"/>
    <property type="molecule type" value="Genomic_DNA"/>
</dbReference>
<dbReference type="RefSeq" id="WP_000873890.1">
    <property type="nucleotide sequence ID" value="NC_007613.1"/>
</dbReference>
<dbReference type="SMR" id="Q31YW6"/>
<dbReference type="GeneID" id="93775023"/>
<dbReference type="KEGG" id="sbo:SBO_2168"/>
<dbReference type="HOGENOM" id="CLU_025885_0_4_6"/>
<dbReference type="Proteomes" id="UP000007067">
    <property type="component" value="Chromosome"/>
</dbReference>
<dbReference type="GO" id="GO:0008833">
    <property type="term" value="F:deoxyribonuclease IV (phage-T4-induced) activity"/>
    <property type="evidence" value="ECO:0007669"/>
    <property type="project" value="UniProtKB-UniRule"/>
</dbReference>
<dbReference type="GO" id="GO:0003677">
    <property type="term" value="F:DNA binding"/>
    <property type="evidence" value="ECO:0007669"/>
    <property type="project" value="InterPro"/>
</dbReference>
<dbReference type="GO" id="GO:0003906">
    <property type="term" value="F:DNA-(apurinic or apyrimidinic site) endonuclease activity"/>
    <property type="evidence" value="ECO:0007669"/>
    <property type="project" value="TreeGrafter"/>
</dbReference>
<dbReference type="GO" id="GO:0008081">
    <property type="term" value="F:phosphoric diester hydrolase activity"/>
    <property type="evidence" value="ECO:0007669"/>
    <property type="project" value="TreeGrafter"/>
</dbReference>
<dbReference type="GO" id="GO:0008270">
    <property type="term" value="F:zinc ion binding"/>
    <property type="evidence" value="ECO:0007669"/>
    <property type="project" value="UniProtKB-UniRule"/>
</dbReference>
<dbReference type="GO" id="GO:0006284">
    <property type="term" value="P:base-excision repair"/>
    <property type="evidence" value="ECO:0007669"/>
    <property type="project" value="TreeGrafter"/>
</dbReference>
<dbReference type="CDD" id="cd00019">
    <property type="entry name" value="AP2Ec"/>
    <property type="match status" value="1"/>
</dbReference>
<dbReference type="FunFam" id="3.20.20.150:FF:000001">
    <property type="entry name" value="Probable endonuclease 4"/>
    <property type="match status" value="1"/>
</dbReference>
<dbReference type="Gene3D" id="3.20.20.150">
    <property type="entry name" value="Divalent-metal-dependent TIM barrel enzymes"/>
    <property type="match status" value="1"/>
</dbReference>
<dbReference type="HAMAP" id="MF_00152">
    <property type="entry name" value="Nfo"/>
    <property type="match status" value="1"/>
</dbReference>
<dbReference type="InterPro" id="IPR001719">
    <property type="entry name" value="AP_endonuc_2"/>
</dbReference>
<dbReference type="InterPro" id="IPR018246">
    <property type="entry name" value="AP_endonuc_F2_Zn_BS"/>
</dbReference>
<dbReference type="InterPro" id="IPR036237">
    <property type="entry name" value="Xyl_isomerase-like_sf"/>
</dbReference>
<dbReference type="InterPro" id="IPR013022">
    <property type="entry name" value="Xyl_isomerase-like_TIM-brl"/>
</dbReference>
<dbReference type="NCBIfam" id="TIGR00587">
    <property type="entry name" value="nfo"/>
    <property type="match status" value="1"/>
</dbReference>
<dbReference type="NCBIfam" id="NF002199">
    <property type="entry name" value="PRK01060.1-4"/>
    <property type="match status" value="1"/>
</dbReference>
<dbReference type="PANTHER" id="PTHR21445:SF0">
    <property type="entry name" value="APURINIC-APYRIMIDINIC ENDONUCLEASE"/>
    <property type="match status" value="1"/>
</dbReference>
<dbReference type="PANTHER" id="PTHR21445">
    <property type="entry name" value="ENDONUCLEASE IV ENDODEOXYRIBONUCLEASE IV"/>
    <property type="match status" value="1"/>
</dbReference>
<dbReference type="Pfam" id="PF01261">
    <property type="entry name" value="AP_endonuc_2"/>
    <property type="match status" value="1"/>
</dbReference>
<dbReference type="SMART" id="SM00518">
    <property type="entry name" value="AP2Ec"/>
    <property type="match status" value="1"/>
</dbReference>
<dbReference type="SUPFAM" id="SSF51658">
    <property type="entry name" value="Xylose isomerase-like"/>
    <property type="match status" value="1"/>
</dbReference>
<dbReference type="PROSITE" id="PS00729">
    <property type="entry name" value="AP_NUCLEASE_F2_1"/>
    <property type="match status" value="1"/>
</dbReference>
<dbReference type="PROSITE" id="PS00730">
    <property type="entry name" value="AP_NUCLEASE_F2_2"/>
    <property type="match status" value="1"/>
</dbReference>
<dbReference type="PROSITE" id="PS00731">
    <property type="entry name" value="AP_NUCLEASE_F2_3"/>
    <property type="match status" value="1"/>
</dbReference>
<dbReference type="PROSITE" id="PS51432">
    <property type="entry name" value="AP_NUCLEASE_F2_4"/>
    <property type="match status" value="1"/>
</dbReference>
<accession>Q31YW6</accession>
<gene>
    <name evidence="1" type="primary">nfo</name>
    <name type="ordered locus">SBO_2168</name>
</gene>